<sequence>MATSAGKLRTLYSAHSSLSSLPPSARPTLQLATLRSYATTTPHDSPIGNTSNTPPTVKRPATAFKDKLNAGPAFSDFVSGKKDEPLDPAEAYALKTALVGPPGRKKEITRLPPWLKTAIPDSSNYKRIKNDLRGLNLHTVCEEARCPNIADCWGGSSKSAATATIMLMGDTCTRGCRFCSVKTSNKPPPLDPHEPDNTAEALSRWGLGYVVLTSVDRDDLADGGARHFAETVMKIKQKAPNILVECLTGDYAGDLDMVALVANSGLDVFAHNVETVEALTPFVRDRRASFQQSLRVLKAAKAAKPELITKTSLMLGLGETEAQLWDALRALRAINVDVVTFGQYMRPTKRHMAVHEYVRPDVFDLWKERALEMGFLYCASGPLVRSSYKAGEAFIENVLKKRRGENAGSVNEKVTTSENVKKLVAGEAMM</sequence>
<reference key="1">
    <citation type="submission" date="2009-02" db="EMBL/GenBank/DDBJ databases">
        <title>The genome sequence of Ajellomyces capsulatus strain G186AR.</title>
        <authorList>
            <person name="Champion M."/>
            <person name="Cuomo C.A."/>
            <person name="Ma L.-J."/>
            <person name="Henn M.R."/>
            <person name="Sil A."/>
            <person name="Goldman B."/>
            <person name="Young S.K."/>
            <person name="Kodira C.D."/>
            <person name="Zeng Q."/>
            <person name="Koehrsen M."/>
            <person name="Alvarado L."/>
            <person name="Berlin A."/>
            <person name="Borenstein D."/>
            <person name="Chen Z."/>
            <person name="Engels R."/>
            <person name="Freedman E."/>
            <person name="Gellesch M."/>
            <person name="Goldberg J."/>
            <person name="Griggs A."/>
            <person name="Gujja S."/>
            <person name="Heiman D."/>
            <person name="Hepburn T."/>
            <person name="Howarth C."/>
            <person name="Jen D."/>
            <person name="Larson L."/>
            <person name="Lewis B."/>
            <person name="Mehta T."/>
            <person name="Park D."/>
            <person name="Pearson M."/>
            <person name="Roberts A."/>
            <person name="Saif S."/>
            <person name="Shea T."/>
            <person name="Shenoy N."/>
            <person name="Sisk P."/>
            <person name="Stolte C."/>
            <person name="Sykes S."/>
            <person name="Walk T."/>
            <person name="White J."/>
            <person name="Yandava C."/>
            <person name="Klein B."/>
            <person name="McEwen J.G."/>
            <person name="Puccia R."/>
            <person name="Goldman G.H."/>
            <person name="Felipe M.S."/>
            <person name="Nino-Vega G."/>
            <person name="San-Blas G."/>
            <person name="Taylor J."/>
            <person name="Mendoza L."/>
            <person name="Galagan J.E."/>
            <person name="Nusbaum C."/>
            <person name="Birren B.W."/>
        </authorList>
    </citation>
    <scope>NUCLEOTIDE SEQUENCE [LARGE SCALE GENOMIC DNA]</scope>
    <source>
        <strain>G186AR / H82 / ATCC MYA-2454 / RMSCC 2432</strain>
    </source>
</reference>
<organism>
    <name type="scientific">Ajellomyces capsulatus (strain G186AR / H82 / ATCC MYA-2454 / RMSCC 2432)</name>
    <name type="common">Darling's disease fungus</name>
    <name type="synonym">Histoplasma capsulatum</name>
    <dbReference type="NCBI Taxonomy" id="447093"/>
    <lineage>
        <taxon>Eukaryota</taxon>
        <taxon>Fungi</taxon>
        <taxon>Dikarya</taxon>
        <taxon>Ascomycota</taxon>
        <taxon>Pezizomycotina</taxon>
        <taxon>Eurotiomycetes</taxon>
        <taxon>Eurotiomycetidae</taxon>
        <taxon>Onygenales</taxon>
        <taxon>Ajellomycetaceae</taxon>
        <taxon>Histoplasma</taxon>
    </lineage>
</organism>
<name>LIPA_AJECG</name>
<dbReference type="EC" id="2.8.1.8" evidence="1"/>
<dbReference type="EMBL" id="GG663376">
    <property type="protein sequence ID" value="EEH03564.1"/>
    <property type="molecule type" value="Genomic_DNA"/>
</dbReference>
<dbReference type="RefSeq" id="XP_045284045.1">
    <property type="nucleotide sequence ID" value="XM_045434739.1"/>
</dbReference>
<dbReference type="SMR" id="C0NXP6"/>
<dbReference type="FunCoup" id="C0NXP6">
    <property type="interactions" value="545"/>
</dbReference>
<dbReference type="STRING" id="447093.C0NXP6"/>
<dbReference type="GeneID" id="69040706"/>
<dbReference type="VEuPathDB" id="FungiDB:I7I50_04421"/>
<dbReference type="HOGENOM" id="CLU_033144_0_0_1"/>
<dbReference type="InParanoid" id="C0NXP6"/>
<dbReference type="UniPathway" id="UPA00538">
    <property type="reaction ID" value="UER00593"/>
</dbReference>
<dbReference type="Proteomes" id="UP000001631">
    <property type="component" value="Unassembled WGS sequence"/>
</dbReference>
<dbReference type="GO" id="GO:0005739">
    <property type="term" value="C:mitochondrion"/>
    <property type="evidence" value="ECO:0007669"/>
    <property type="project" value="UniProtKB-SubCell"/>
</dbReference>
<dbReference type="GO" id="GO:0051539">
    <property type="term" value="F:4 iron, 4 sulfur cluster binding"/>
    <property type="evidence" value="ECO:0007669"/>
    <property type="project" value="UniProtKB-UniRule"/>
</dbReference>
<dbReference type="GO" id="GO:0016992">
    <property type="term" value="F:lipoate synthase activity"/>
    <property type="evidence" value="ECO:0007669"/>
    <property type="project" value="UniProtKB-UniRule"/>
</dbReference>
<dbReference type="GO" id="GO:0046872">
    <property type="term" value="F:metal ion binding"/>
    <property type="evidence" value="ECO:0007669"/>
    <property type="project" value="UniProtKB-KW"/>
</dbReference>
<dbReference type="CDD" id="cd01335">
    <property type="entry name" value="Radical_SAM"/>
    <property type="match status" value="1"/>
</dbReference>
<dbReference type="FunFam" id="3.20.20.70:FF:000036">
    <property type="entry name" value="Lipoyl synthase, mitochondrial"/>
    <property type="match status" value="1"/>
</dbReference>
<dbReference type="Gene3D" id="3.20.20.70">
    <property type="entry name" value="Aldolase class I"/>
    <property type="match status" value="1"/>
</dbReference>
<dbReference type="HAMAP" id="MF_00206">
    <property type="entry name" value="Lipoyl_synth"/>
    <property type="match status" value="1"/>
</dbReference>
<dbReference type="InterPro" id="IPR013785">
    <property type="entry name" value="Aldolase_TIM"/>
</dbReference>
<dbReference type="InterPro" id="IPR006638">
    <property type="entry name" value="Elp3/MiaA/NifB-like_rSAM"/>
</dbReference>
<dbReference type="InterPro" id="IPR031691">
    <property type="entry name" value="LIAS_N"/>
</dbReference>
<dbReference type="InterPro" id="IPR003698">
    <property type="entry name" value="Lipoyl_synth"/>
</dbReference>
<dbReference type="InterPro" id="IPR007197">
    <property type="entry name" value="rSAM"/>
</dbReference>
<dbReference type="NCBIfam" id="TIGR00510">
    <property type="entry name" value="lipA"/>
    <property type="match status" value="1"/>
</dbReference>
<dbReference type="NCBIfam" id="NF004019">
    <property type="entry name" value="PRK05481.1"/>
    <property type="match status" value="1"/>
</dbReference>
<dbReference type="NCBIfam" id="NF009544">
    <property type="entry name" value="PRK12928.1"/>
    <property type="match status" value="1"/>
</dbReference>
<dbReference type="PANTHER" id="PTHR10949">
    <property type="entry name" value="LIPOYL SYNTHASE"/>
    <property type="match status" value="1"/>
</dbReference>
<dbReference type="PANTHER" id="PTHR10949:SF0">
    <property type="entry name" value="LIPOYL SYNTHASE, MITOCHONDRIAL"/>
    <property type="match status" value="1"/>
</dbReference>
<dbReference type="Pfam" id="PF16881">
    <property type="entry name" value="LIAS_N"/>
    <property type="match status" value="1"/>
</dbReference>
<dbReference type="Pfam" id="PF04055">
    <property type="entry name" value="Radical_SAM"/>
    <property type="match status" value="1"/>
</dbReference>
<dbReference type="SFLD" id="SFLDF00271">
    <property type="entry name" value="lipoyl_synthase"/>
    <property type="match status" value="1"/>
</dbReference>
<dbReference type="SFLD" id="SFLDG01058">
    <property type="entry name" value="lipoyl_synthase_like"/>
    <property type="match status" value="1"/>
</dbReference>
<dbReference type="SMART" id="SM00729">
    <property type="entry name" value="Elp3"/>
    <property type="match status" value="1"/>
</dbReference>
<dbReference type="SUPFAM" id="SSF102114">
    <property type="entry name" value="Radical SAM enzymes"/>
    <property type="match status" value="1"/>
</dbReference>
<dbReference type="PROSITE" id="PS51918">
    <property type="entry name" value="RADICAL_SAM"/>
    <property type="match status" value="1"/>
</dbReference>
<comment type="function">
    <text evidence="1">Catalyzes the radical-mediated insertion of two sulfur atoms into the C-6 and C-8 positions of the octanoyl moiety bound to the lipoyl domains of lipoate-dependent enzymes, thereby converting the octanoylated domains into lipoylated derivatives.</text>
</comment>
<comment type="catalytic activity">
    <reaction evidence="1">
        <text>[[Fe-S] cluster scaffold protein carrying a second [4Fe-4S](2+) cluster] + N(6)-octanoyl-L-lysyl-[protein] + 2 oxidized [2Fe-2S]-[ferredoxin] + 2 S-adenosyl-L-methionine + 4 H(+) = [[Fe-S] cluster scaffold protein] + N(6)-[(R)-dihydrolipoyl]-L-lysyl-[protein] + 4 Fe(3+) + 2 hydrogen sulfide + 2 5'-deoxyadenosine + 2 L-methionine + 2 reduced [2Fe-2S]-[ferredoxin]</text>
        <dbReference type="Rhea" id="RHEA:16585"/>
        <dbReference type="Rhea" id="RHEA-COMP:9928"/>
        <dbReference type="Rhea" id="RHEA-COMP:10000"/>
        <dbReference type="Rhea" id="RHEA-COMP:10001"/>
        <dbReference type="Rhea" id="RHEA-COMP:10475"/>
        <dbReference type="Rhea" id="RHEA-COMP:14568"/>
        <dbReference type="Rhea" id="RHEA-COMP:14569"/>
        <dbReference type="ChEBI" id="CHEBI:15378"/>
        <dbReference type="ChEBI" id="CHEBI:17319"/>
        <dbReference type="ChEBI" id="CHEBI:29034"/>
        <dbReference type="ChEBI" id="CHEBI:29919"/>
        <dbReference type="ChEBI" id="CHEBI:33722"/>
        <dbReference type="ChEBI" id="CHEBI:33737"/>
        <dbReference type="ChEBI" id="CHEBI:33738"/>
        <dbReference type="ChEBI" id="CHEBI:57844"/>
        <dbReference type="ChEBI" id="CHEBI:59789"/>
        <dbReference type="ChEBI" id="CHEBI:78809"/>
        <dbReference type="ChEBI" id="CHEBI:83100"/>
        <dbReference type="EC" id="2.8.1.8"/>
    </reaction>
</comment>
<comment type="cofactor">
    <cofactor evidence="1">
        <name>[4Fe-4S] cluster</name>
        <dbReference type="ChEBI" id="CHEBI:49883"/>
    </cofactor>
    <text evidence="1">Binds 2 [4Fe-4S] clusters per subunit. One cluster is coordinated with 3 cysteines and an exchangeable S-adenosyl-L-methionine.</text>
</comment>
<comment type="pathway">
    <text evidence="1">Protein modification; protein lipoylation via endogenous pathway; protein N(6)-(lipoyl)lysine from octanoyl-[acyl-carrier-protein]: step 2/2.</text>
</comment>
<comment type="subcellular location">
    <subcellularLocation>
        <location evidence="1">Mitochondrion</location>
    </subcellularLocation>
</comment>
<comment type="similarity">
    <text evidence="1">Belongs to the radical SAM superfamily. Lipoyl synthase family.</text>
</comment>
<evidence type="ECO:0000255" key="1">
    <source>
        <dbReference type="HAMAP-Rule" id="MF_03123"/>
    </source>
</evidence>
<evidence type="ECO:0000255" key="2">
    <source>
        <dbReference type="PROSITE-ProRule" id="PRU01266"/>
    </source>
</evidence>
<evidence type="ECO:0000256" key="3">
    <source>
        <dbReference type="SAM" id="MobiDB-lite"/>
    </source>
</evidence>
<feature type="transit peptide" description="Mitochondrion" evidence="1">
    <location>
        <begin position="1"/>
        <end position="37"/>
    </location>
</feature>
<feature type="chain" id="PRO_0000398246" description="Lipoyl synthase, mitochondrial">
    <location>
        <begin position="38"/>
        <end position="430"/>
    </location>
</feature>
<feature type="domain" description="Radical SAM core" evidence="2">
    <location>
        <begin position="155"/>
        <end position="376"/>
    </location>
</feature>
<feature type="region of interest" description="Disordered" evidence="3">
    <location>
        <begin position="39"/>
        <end position="58"/>
    </location>
</feature>
<feature type="compositionally biased region" description="Polar residues" evidence="3">
    <location>
        <begin position="39"/>
        <end position="55"/>
    </location>
</feature>
<feature type="binding site" evidence="1">
    <location>
        <position position="141"/>
    </location>
    <ligand>
        <name>[4Fe-4S] cluster</name>
        <dbReference type="ChEBI" id="CHEBI:49883"/>
        <label>1</label>
    </ligand>
</feature>
<feature type="binding site" evidence="1">
    <location>
        <position position="146"/>
    </location>
    <ligand>
        <name>[4Fe-4S] cluster</name>
        <dbReference type="ChEBI" id="CHEBI:49883"/>
        <label>1</label>
    </ligand>
</feature>
<feature type="binding site" evidence="1">
    <location>
        <position position="152"/>
    </location>
    <ligand>
        <name>[4Fe-4S] cluster</name>
        <dbReference type="ChEBI" id="CHEBI:49883"/>
        <label>1</label>
    </ligand>
</feature>
<feature type="binding site" evidence="1">
    <location>
        <position position="172"/>
    </location>
    <ligand>
        <name>[4Fe-4S] cluster</name>
        <dbReference type="ChEBI" id="CHEBI:49883"/>
        <label>2</label>
        <note>4Fe-4S-S-AdoMet</note>
    </ligand>
</feature>
<feature type="binding site" evidence="1">
    <location>
        <position position="176"/>
    </location>
    <ligand>
        <name>[4Fe-4S] cluster</name>
        <dbReference type="ChEBI" id="CHEBI:49883"/>
        <label>2</label>
        <note>4Fe-4S-S-AdoMet</note>
    </ligand>
</feature>
<feature type="binding site" evidence="1">
    <location>
        <position position="179"/>
    </location>
    <ligand>
        <name>[4Fe-4S] cluster</name>
        <dbReference type="ChEBI" id="CHEBI:49883"/>
        <label>2</label>
        <note>4Fe-4S-S-AdoMet</note>
    </ligand>
</feature>
<feature type="binding site" evidence="1">
    <location>
        <position position="387"/>
    </location>
    <ligand>
        <name>[4Fe-4S] cluster</name>
        <dbReference type="ChEBI" id="CHEBI:49883"/>
        <label>1</label>
    </ligand>
</feature>
<keyword id="KW-0004">4Fe-4S</keyword>
<keyword id="KW-0408">Iron</keyword>
<keyword id="KW-0411">Iron-sulfur</keyword>
<keyword id="KW-0479">Metal-binding</keyword>
<keyword id="KW-0496">Mitochondrion</keyword>
<keyword id="KW-1185">Reference proteome</keyword>
<keyword id="KW-0949">S-adenosyl-L-methionine</keyword>
<keyword id="KW-0808">Transferase</keyword>
<keyword id="KW-0809">Transit peptide</keyword>
<gene>
    <name type="ORF">HCBG_07690</name>
</gene>
<accession>C0NXP6</accession>
<proteinExistence type="inferred from homology"/>
<protein>
    <recommendedName>
        <fullName evidence="1">Lipoyl synthase, mitochondrial</fullName>
        <ecNumber evidence="1">2.8.1.8</ecNumber>
    </recommendedName>
    <alternativeName>
        <fullName evidence="1">Lipoate synthase</fullName>
        <shortName evidence="1">LS</shortName>
        <shortName evidence="1">Lip-syn</shortName>
    </alternativeName>
    <alternativeName>
        <fullName evidence="1">Lipoic acid synthase</fullName>
    </alternativeName>
</protein>